<reference key="1">
    <citation type="journal article" date="1998" name="Science">
        <title>Genome sequence of the nematode C. elegans: a platform for investigating biology.</title>
        <authorList>
            <consortium name="The C. elegans sequencing consortium"/>
        </authorList>
    </citation>
    <scope>NUCLEOTIDE SEQUENCE [LARGE SCALE GENOMIC DNA]</scope>
    <source>
        <strain>Bristol N2</strain>
    </source>
</reference>
<reference key="2">
    <citation type="journal article" date="2014" name="Cell">
        <title>Forgetting is regulated via Musashi-mediated translational control of the Arp2/3 complex.</title>
        <authorList>
            <person name="Hadziselimovic N."/>
            <person name="Vukojevic V."/>
            <person name="Peter F."/>
            <person name="Milnik A."/>
            <person name="Fastenrath M."/>
            <person name="Fenyves B.G."/>
            <person name="Hieber P."/>
            <person name="Demougin P."/>
            <person name="Vogler C."/>
            <person name="de Quervain D.J."/>
            <person name="Papassotiropoulos A."/>
            <person name="Stetak A."/>
        </authorList>
    </citation>
    <scope>FUNCTION</scope>
    <scope>IDENTIFICATION IN ARP2/3 COMPLEX</scope>
    <scope>DISRUPTION PHENOTYPE</scope>
</reference>
<evidence type="ECO:0000250" key="1"/>
<evidence type="ECO:0000269" key="2">
    <source>
    </source>
</evidence>
<evidence type="ECO:0000305" key="3"/>
<evidence type="ECO:0000305" key="4">
    <source>
    </source>
</evidence>
<evidence type="ECO:0000312" key="5">
    <source>
        <dbReference type="WormBase" id="Y71F9AL.16"/>
    </source>
</evidence>
<keyword id="KW-0009">Actin-binding</keyword>
<keyword id="KW-0067">ATP-binding</keyword>
<keyword id="KW-0963">Cytoplasm</keyword>
<keyword id="KW-0206">Cytoskeleton</keyword>
<keyword id="KW-0547">Nucleotide-binding</keyword>
<keyword id="KW-1185">Reference proteome</keyword>
<accession>Q9N4I0</accession>
<dbReference type="EMBL" id="BX284601">
    <property type="protein sequence ID" value="CCD73510.1"/>
    <property type="molecule type" value="Genomic_DNA"/>
</dbReference>
<dbReference type="RefSeq" id="NP_491066.1">
    <property type="nucleotide sequence ID" value="NM_058665.8"/>
</dbReference>
<dbReference type="SMR" id="Q9N4I0"/>
<dbReference type="BioGRID" id="37336">
    <property type="interactions" value="13"/>
</dbReference>
<dbReference type="FunCoup" id="Q9N4I0">
    <property type="interactions" value="2633"/>
</dbReference>
<dbReference type="IntAct" id="Q9N4I0">
    <property type="interactions" value="2"/>
</dbReference>
<dbReference type="STRING" id="6239.Y71F9AL.16.1"/>
<dbReference type="PaxDb" id="6239-Y71F9AL.16"/>
<dbReference type="PeptideAtlas" id="Q9N4I0"/>
<dbReference type="EnsemblMetazoa" id="Y71F9AL.16.1">
    <property type="protein sequence ID" value="Y71F9AL.16.1"/>
    <property type="gene ID" value="WBGene00000199"/>
</dbReference>
<dbReference type="GeneID" id="171857"/>
<dbReference type="KEGG" id="cel:CELE_Y71F9AL.16"/>
<dbReference type="UCSC" id="Y71F9AL.16">
    <property type="organism name" value="c. elegans"/>
</dbReference>
<dbReference type="AGR" id="WB:WBGene00000199"/>
<dbReference type="CTD" id="171857"/>
<dbReference type="WormBase" id="Y71F9AL.16">
    <property type="protein sequence ID" value="CE25554"/>
    <property type="gene ID" value="WBGene00000199"/>
    <property type="gene designation" value="arx-1"/>
</dbReference>
<dbReference type="eggNOG" id="KOG0678">
    <property type="taxonomic scope" value="Eukaryota"/>
</dbReference>
<dbReference type="GeneTree" id="ENSGT00940000155065"/>
<dbReference type="HOGENOM" id="CLU_027965_3_0_1"/>
<dbReference type="InParanoid" id="Q9N4I0"/>
<dbReference type="OMA" id="GIHYPIR"/>
<dbReference type="OrthoDB" id="421448at2759"/>
<dbReference type="PhylomeDB" id="Q9N4I0"/>
<dbReference type="Reactome" id="R-CEL-2029482">
    <property type="pathway name" value="Regulation of actin dynamics for phagocytic cup formation"/>
</dbReference>
<dbReference type="Reactome" id="R-CEL-3928662">
    <property type="pathway name" value="EPHB-mediated forward signaling"/>
</dbReference>
<dbReference type="Reactome" id="R-CEL-5663213">
    <property type="pathway name" value="RHO GTPases Activate WASPs and WAVEs"/>
</dbReference>
<dbReference type="Reactome" id="R-CEL-8856828">
    <property type="pathway name" value="Clathrin-mediated endocytosis"/>
</dbReference>
<dbReference type="PRO" id="PR:Q9N4I0"/>
<dbReference type="Proteomes" id="UP000001940">
    <property type="component" value="Chromosome I"/>
</dbReference>
<dbReference type="Bgee" id="WBGene00000199">
    <property type="expression patterns" value="Expressed in pharyngeal muscle cell (C elegans) and 4 other cell types or tissues"/>
</dbReference>
<dbReference type="GO" id="GO:0005885">
    <property type="term" value="C:Arp2/3 protein complex"/>
    <property type="evidence" value="ECO:0000318"/>
    <property type="project" value="GO_Central"/>
</dbReference>
<dbReference type="GO" id="GO:0031252">
    <property type="term" value="C:cell leading edge"/>
    <property type="evidence" value="ECO:0000314"/>
    <property type="project" value="WormBase"/>
</dbReference>
<dbReference type="GO" id="GO:0005737">
    <property type="term" value="C:cytoplasm"/>
    <property type="evidence" value="ECO:0000314"/>
    <property type="project" value="WormBase"/>
</dbReference>
<dbReference type="GO" id="GO:0003779">
    <property type="term" value="F:actin binding"/>
    <property type="evidence" value="ECO:0007669"/>
    <property type="project" value="UniProtKB-KW"/>
</dbReference>
<dbReference type="GO" id="GO:0005524">
    <property type="term" value="F:ATP binding"/>
    <property type="evidence" value="ECO:0007669"/>
    <property type="project" value="UniProtKB-KW"/>
</dbReference>
<dbReference type="GO" id="GO:0034314">
    <property type="term" value="P:Arp2/3 complex-mediated actin nucleation"/>
    <property type="evidence" value="ECO:0000315"/>
    <property type="project" value="WormBase"/>
</dbReference>
<dbReference type="GO" id="GO:0010631">
    <property type="term" value="P:epithelial cell migration"/>
    <property type="evidence" value="ECO:0000315"/>
    <property type="project" value="WormBase"/>
</dbReference>
<dbReference type="GO" id="GO:0007369">
    <property type="term" value="P:gastrulation"/>
    <property type="evidence" value="ECO:0000315"/>
    <property type="project" value="WormBase"/>
</dbReference>
<dbReference type="GO" id="GO:0016331">
    <property type="term" value="P:morphogenesis of embryonic epithelium"/>
    <property type="evidence" value="ECO:0000315"/>
    <property type="project" value="WormBase"/>
</dbReference>
<dbReference type="CDD" id="cd10221">
    <property type="entry name" value="ASKHA_NBD_Arp3-like"/>
    <property type="match status" value="1"/>
</dbReference>
<dbReference type="FunFam" id="3.30.420.40:FF:000029">
    <property type="entry name" value="Actin-related protein 3"/>
    <property type="match status" value="1"/>
</dbReference>
<dbReference type="FunFam" id="3.90.640.10:FF:000006">
    <property type="entry name" value="Actin-related protein 3 (ARP3)"/>
    <property type="match status" value="1"/>
</dbReference>
<dbReference type="Gene3D" id="3.30.420.40">
    <property type="match status" value="2"/>
</dbReference>
<dbReference type="Gene3D" id="3.90.640.10">
    <property type="entry name" value="Actin, Chain A, domain 4"/>
    <property type="match status" value="1"/>
</dbReference>
<dbReference type="InterPro" id="IPR004000">
    <property type="entry name" value="Actin"/>
</dbReference>
<dbReference type="InterPro" id="IPR020902">
    <property type="entry name" value="Actin/actin-like_CS"/>
</dbReference>
<dbReference type="InterPro" id="IPR043129">
    <property type="entry name" value="ATPase_NBD"/>
</dbReference>
<dbReference type="PANTHER" id="PTHR11937">
    <property type="entry name" value="ACTIN"/>
    <property type="match status" value="1"/>
</dbReference>
<dbReference type="Pfam" id="PF00022">
    <property type="entry name" value="Actin"/>
    <property type="match status" value="1"/>
</dbReference>
<dbReference type="SMART" id="SM00268">
    <property type="entry name" value="ACTIN"/>
    <property type="match status" value="1"/>
</dbReference>
<dbReference type="SUPFAM" id="SSF53067">
    <property type="entry name" value="Actin-like ATPase domain"/>
    <property type="match status" value="2"/>
</dbReference>
<dbReference type="PROSITE" id="PS01132">
    <property type="entry name" value="ACTINS_ACT_LIKE"/>
    <property type="match status" value="1"/>
</dbReference>
<name>ARP3_CAEEL</name>
<organism>
    <name type="scientific">Caenorhabditis elegans</name>
    <dbReference type="NCBI Taxonomy" id="6239"/>
    <lineage>
        <taxon>Eukaryota</taxon>
        <taxon>Metazoa</taxon>
        <taxon>Ecdysozoa</taxon>
        <taxon>Nematoda</taxon>
        <taxon>Chromadorea</taxon>
        <taxon>Rhabditida</taxon>
        <taxon>Rhabditina</taxon>
        <taxon>Rhabditomorpha</taxon>
        <taxon>Rhabditoidea</taxon>
        <taxon>Rhabditidae</taxon>
        <taxon>Peloderinae</taxon>
        <taxon>Caenorhabditis</taxon>
    </lineage>
</organism>
<comment type="function">
    <text evidence="1 2">Functions as ATP-binding component of the Arp2/3 complex which is involved in regulation of actin polymerization and together with an activating nucleation-promoting factor (NPF) mediates the formation of branched actin networks. Seems to contact the pointed end of the daughter actin filament (By similarity). Plays a role in time-dependent memory loss and the retention of conditioned behavior over time (PubMed:24630719).</text>
</comment>
<comment type="subunit">
    <text evidence="4">Component of the Arp2/3 complex, at least composed of arx-1, arx-2, arx-4 and arx-6.</text>
</comment>
<comment type="subcellular location">
    <subcellularLocation>
        <location evidence="1">Cytoplasm</location>
        <location evidence="1">Cytoskeleton</location>
    </subcellularLocation>
</comment>
<comment type="disruption phenotype">
    <text evidence="2">RNAi-mediated knockdown suppresses the memory retention defects of the msi-1 os1 loss of function mutant.</text>
</comment>
<comment type="similarity">
    <text evidence="3">Belongs to the actin family. ARP3 subfamily.</text>
</comment>
<feature type="chain" id="PRO_0000089085" description="Actin-related protein 3">
    <location>
        <begin position="1"/>
        <end position="425"/>
    </location>
</feature>
<gene>
    <name evidence="5" type="primary">arx-1</name>
    <name evidence="5" type="ORF">Y71F9AL.16</name>
</gene>
<sequence length="425" mass="48088">MSAHQLPACVIDNGTGYTKLGYAGNTEPQFIIPSAIAVKDKVASSNSQAMRWNNRVGAGIDDLDFFIGDEALSPAATNYTVKYPIRHGIVEDWDLMERYWEQCIFKYLRAEPEDHFFLLTEPPLNTPENREYTAEIMFESFNVPGLYIAVQAVLALTASWNSREANERSLTGLVIDSGDGVTHCIPVADGYVIGSCIKHIPIAGRDITYFIQSLLRDREHTIPAEQSYEVAKMIKEKFCYVCPDVMKEFVKYDTDAAKWLRTYDGINSITKKPFNVDVGYERFLGPEIFFHPEFCNPEFTTPISDTIDTLIQQCPIDVRRGLYENIVLSGGSTMFKDFARKLQRDVKRLSDGRLQMSETLSGGRLKPKPIDVQVISHKMQRYAVWFGGSMLASTSEFYQVSHTKAEYMERGPSICRYNPVFGALT</sequence>
<protein>
    <recommendedName>
        <fullName>Actin-related protein 3</fullName>
    </recommendedName>
    <alternativeName>
        <fullName>Actin-like protein 3</fullName>
    </alternativeName>
</protein>
<proteinExistence type="evidence at protein level"/>